<sequence length="632" mass="73644">MVDINLECVHFIEPKNTRSTEQQQQNVKNAYLEAVRILLVLLENVLSQPNNTKFRTIRLDNKAIKEKLLSLPGCEKLLYAIGFRHTPSSNSYTLPGEVSLQQIQKYYDVLRERRTAWLSGAMPKSPAHPKAACSTPSPLFIKTSVPYRQRITFPRVLRTSNRFLQSLELYSDAVMQYEDELLLATGRSLIPVDDLTSKASEKMMAMQDLIASGECSEKEPCIRDLLLVELTNWFNTQFFEWVNNIQCQVCGSEESKLRRTQTEGDVRVEVNVCCGQESKFYRYNDISQLLVSRKGRCGEYANCFTFLCRCLDYDARLVHSHFDHVWTEVFSETQMRWLHVDPSDNVVDSPLMYQHGWKRGIDYVFAYSRDDAQDVTWRYTNNHQEILKLRKLCDEKELIQTLNAIREKRQQNCSAERKNFLSQRNMFEVIGLTLERKPTENELKGRSSGSLSWRQSRGEHTFTNIFVFSPNEAELKKCQLNLRYSCATDTYERYTKDDGQITLLNTYKTWQSAQFSSKNIYRKVERDWKMAYLARLEDTDCAEIIWKFDLTKTNLKVKSYKLVFETKTFGEGKIDVSVQTNDGKTFIENSSEFQVVAKLMGGKGDVAWQHTQLFRQSLNSREYPFDLQVELH</sequence>
<dbReference type="EC" id="3.5.1.52"/>
<dbReference type="EMBL" id="CM000071">
    <property type="protein sequence ID" value="EAL25908.2"/>
    <property type="molecule type" value="Genomic_DNA"/>
</dbReference>
<dbReference type="RefSeq" id="XP_001361330.2">
    <property type="nucleotide sequence ID" value="XM_001361293.3"/>
</dbReference>
<dbReference type="SMR" id="Q28YQ7"/>
<dbReference type="FunCoup" id="Q28YQ7">
    <property type="interactions" value="2534"/>
</dbReference>
<dbReference type="IntAct" id="Q28YQ7">
    <property type="interactions" value="1"/>
</dbReference>
<dbReference type="STRING" id="46245.Q28YQ7"/>
<dbReference type="EnsemblMetazoa" id="FBtr0277839">
    <property type="protein sequence ID" value="FBpp0276277"/>
    <property type="gene ID" value="FBgn0080637"/>
</dbReference>
<dbReference type="eggNOG" id="KOG0909">
    <property type="taxonomic scope" value="Eukaryota"/>
</dbReference>
<dbReference type="HOGENOM" id="CLU_030187_1_0_1"/>
<dbReference type="InParanoid" id="Q28YQ7"/>
<dbReference type="OMA" id="ENHYCSQ"/>
<dbReference type="Proteomes" id="UP000001819">
    <property type="component" value="Unplaced"/>
</dbReference>
<dbReference type="Bgee" id="FBgn0080637">
    <property type="expression patterns" value="Expressed in insect adult head and 2 other cell types or tissues"/>
</dbReference>
<dbReference type="GO" id="GO:0005737">
    <property type="term" value="C:cytoplasm"/>
    <property type="evidence" value="ECO:0000250"/>
    <property type="project" value="UniProtKB"/>
</dbReference>
<dbReference type="GO" id="GO:0005829">
    <property type="term" value="C:cytosol"/>
    <property type="evidence" value="ECO:0007669"/>
    <property type="project" value="TreeGrafter"/>
</dbReference>
<dbReference type="GO" id="GO:0005634">
    <property type="term" value="C:nucleus"/>
    <property type="evidence" value="ECO:0007669"/>
    <property type="project" value="TreeGrafter"/>
</dbReference>
<dbReference type="GO" id="GO:0046872">
    <property type="term" value="F:metal ion binding"/>
    <property type="evidence" value="ECO:0007669"/>
    <property type="project" value="UniProtKB-KW"/>
</dbReference>
<dbReference type="GO" id="GO:0000224">
    <property type="term" value="F:peptide-N4-(N-acetyl-beta-glucosaminyl)asparagine amidase activity"/>
    <property type="evidence" value="ECO:0007669"/>
    <property type="project" value="UniProtKB-EC"/>
</dbReference>
<dbReference type="GO" id="GO:0006516">
    <property type="term" value="P:glycoprotein catabolic process"/>
    <property type="evidence" value="ECO:0000250"/>
    <property type="project" value="UniProtKB"/>
</dbReference>
<dbReference type="CDD" id="cd09212">
    <property type="entry name" value="PUB"/>
    <property type="match status" value="1"/>
</dbReference>
<dbReference type="FunFam" id="1.20.58.2190:FF:000001">
    <property type="entry name" value="peptide-N(4)-(N-acetyl-beta- glucosaminyl)asparagine amidase"/>
    <property type="match status" value="1"/>
</dbReference>
<dbReference type="FunFam" id="2.60.120.1020:FF:000001">
    <property type="entry name" value="Peptide-N(4)-(N-acetyl-beta-glucosaminyl)asparagine amidase"/>
    <property type="match status" value="1"/>
</dbReference>
<dbReference type="Gene3D" id="1.20.58.2190">
    <property type="match status" value="1"/>
</dbReference>
<dbReference type="Gene3D" id="2.20.25.10">
    <property type="match status" value="1"/>
</dbReference>
<dbReference type="Gene3D" id="3.10.620.30">
    <property type="match status" value="1"/>
</dbReference>
<dbReference type="Gene3D" id="2.60.120.1020">
    <property type="entry name" value="Peptide N glycanase, PAW domain"/>
    <property type="match status" value="1"/>
</dbReference>
<dbReference type="InterPro" id="IPR008979">
    <property type="entry name" value="Galactose-bd-like_sf"/>
</dbReference>
<dbReference type="InterPro" id="IPR038765">
    <property type="entry name" value="Papain-like_cys_pep_sf"/>
</dbReference>
<dbReference type="InterPro" id="IPR038680">
    <property type="entry name" value="PAW_sf"/>
</dbReference>
<dbReference type="InterPro" id="IPR006588">
    <property type="entry name" value="Peptide_N_glycanase_PAW_dom"/>
</dbReference>
<dbReference type="InterPro" id="IPR050883">
    <property type="entry name" value="PNGase"/>
</dbReference>
<dbReference type="InterPro" id="IPR036339">
    <property type="entry name" value="PUB-like_dom_sf"/>
</dbReference>
<dbReference type="InterPro" id="IPR018997">
    <property type="entry name" value="PUB_domain"/>
</dbReference>
<dbReference type="InterPro" id="IPR002931">
    <property type="entry name" value="Transglutaminase-like"/>
</dbReference>
<dbReference type="PANTHER" id="PTHR12143">
    <property type="entry name" value="PEPTIDE N-GLYCANASE PNGASE -RELATED"/>
    <property type="match status" value="1"/>
</dbReference>
<dbReference type="PANTHER" id="PTHR12143:SF19">
    <property type="entry name" value="PEPTIDE-N(4)-(N-ACETYL-BETA-GLUCOSAMINYL)ASPARAGINE AMIDASE"/>
    <property type="match status" value="1"/>
</dbReference>
<dbReference type="Pfam" id="PF04721">
    <property type="entry name" value="PAW"/>
    <property type="match status" value="1"/>
</dbReference>
<dbReference type="Pfam" id="PF09409">
    <property type="entry name" value="PUB"/>
    <property type="match status" value="1"/>
</dbReference>
<dbReference type="Pfam" id="PF01841">
    <property type="entry name" value="Transglut_core"/>
    <property type="match status" value="1"/>
</dbReference>
<dbReference type="SMART" id="SM00613">
    <property type="entry name" value="PAW"/>
    <property type="match status" value="1"/>
</dbReference>
<dbReference type="SMART" id="SM00580">
    <property type="entry name" value="PUG"/>
    <property type="match status" value="1"/>
</dbReference>
<dbReference type="SMART" id="SM00460">
    <property type="entry name" value="TGc"/>
    <property type="match status" value="1"/>
</dbReference>
<dbReference type="SUPFAM" id="SSF54001">
    <property type="entry name" value="Cysteine proteinases"/>
    <property type="match status" value="1"/>
</dbReference>
<dbReference type="SUPFAM" id="SSF49785">
    <property type="entry name" value="Galactose-binding domain-like"/>
    <property type="match status" value="1"/>
</dbReference>
<dbReference type="SUPFAM" id="SSF143503">
    <property type="entry name" value="PUG domain-like"/>
    <property type="match status" value="1"/>
</dbReference>
<dbReference type="PROSITE" id="PS51398">
    <property type="entry name" value="PAW"/>
    <property type="match status" value="1"/>
</dbReference>
<keyword id="KW-0963">Cytoplasm</keyword>
<keyword id="KW-0378">Hydrolase</keyword>
<keyword id="KW-0479">Metal-binding</keyword>
<keyword id="KW-1185">Reference proteome</keyword>
<keyword id="KW-0862">Zinc</keyword>
<protein>
    <recommendedName>
        <fullName>Peptide-N(4)-(N-acetyl-beta-glucosaminyl)asparagine amidase</fullName>
        <ecNumber>3.5.1.52</ecNumber>
    </recommendedName>
    <alternativeName>
        <fullName>Peptide:N-glycanase</fullName>
    </alternativeName>
</protein>
<name>NGLY1_DROPS</name>
<proteinExistence type="inferred from homology"/>
<organism>
    <name type="scientific">Drosophila pseudoobscura pseudoobscura</name>
    <name type="common">Fruit fly</name>
    <dbReference type="NCBI Taxonomy" id="46245"/>
    <lineage>
        <taxon>Eukaryota</taxon>
        <taxon>Metazoa</taxon>
        <taxon>Ecdysozoa</taxon>
        <taxon>Arthropoda</taxon>
        <taxon>Hexapoda</taxon>
        <taxon>Insecta</taxon>
        <taxon>Pterygota</taxon>
        <taxon>Neoptera</taxon>
        <taxon>Endopterygota</taxon>
        <taxon>Diptera</taxon>
        <taxon>Brachycera</taxon>
        <taxon>Muscomorpha</taxon>
        <taxon>Ephydroidea</taxon>
        <taxon>Drosophilidae</taxon>
        <taxon>Drosophila</taxon>
        <taxon>Sophophora</taxon>
    </lineage>
</organism>
<comment type="function">
    <text evidence="1">Specifically deglycosylates the denatured form of N-linked glycoproteins in the cytoplasm and assists their proteasome-mediated degradation. Cleaves the beta-aspartyl-glucosamine (GlcNAc) of the glycan and the amide side chain of Asn, converting Asn to Asp. Prefers proteins containing high-mannose over those bearing complex type oligosaccharides. Can recognize misfolded proteins in the endoplasmic reticulum that are exported to the cytosol to be destroyed and deglycosylate them, while it has no activity toward native proteins. Deglycosylation is a prerequisite for subsequent proteasome-mediated degradation of some, but not all, misfolded glycoproteins (By similarity).</text>
</comment>
<comment type="catalytic activity">
    <reaction>
        <text>Hydrolysis of an N(4)-(acetyl-beta-D-glucosaminyl)asparagine residue in which the glucosamine residue may be further glycosylated, to yield a (substituted) N-acetyl-beta-D-glucosaminylamine and a peptide containing an aspartate residue.</text>
        <dbReference type="EC" id="3.5.1.52"/>
    </reaction>
</comment>
<comment type="cofactor">
    <cofactor evidence="1">
        <name>Zn(2+)</name>
        <dbReference type="ChEBI" id="CHEBI:29105"/>
    </cofactor>
    <text evidence="1">Binds 1 zinc ion per subunit.</text>
</comment>
<comment type="subcellular location">
    <subcellularLocation>
        <location evidence="1">Cytoplasm</location>
    </subcellularLocation>
</comment>
<comment type="similarity">
    <text evidence="2">Belongs to the transglutaminase-like superfamily. PNGase family.</text>
</comment>
<evidence type="ECO:0000250" key="1"/>
<evidence type="ECO:0000255" key="2">
    <source>
        <dbReference type="PROSITE-ProRule" id="PRU00731"/>
    </source>
</evidence>
<accession>Q28YQ7</accession>
<feature type="chain" id="PRO_0000248980" description="Peptide-N(4)-(N-acetyl-beta-glucosaminyl)asparagine amidase">
    <location>
        <begin position="1"/>
        <end position="632"/>
    </location>
</feature>
<feature type="domain" description="PUB">
    <location>
        <begin position="33"/>
        <end position="96"/>
    </location>
</feature>
<feature type="domain" description="PAW" evidence="2">
    <location>
        <begin position="442"/>
        <end position="632"/>
    </location>
</feature>
<feature type="active site" description="Nucleophile" evidence="1">
    <location>
        <position position="297"/>
    </location>
</feature>
<feature type="active site" evidence="1">
    <location>
        <position position="324"/>
    </location>
</feature>
<feature type="active site" evidence="1">
    <location>
        <position position="341"/>
    </location>
</feature>
<feature type="binding site" evidence="1">
    <location>
        <position position="247"/>
    </location>
    <ligand>
        <name>Zn(2+)</name>
        <dbReference type="ChEBI" id="CHEBI:29105"/>
    </ligand>
</feature>
<feature type="binding site" evidence="1">
    <location>
        <position position="250"/>
    </location>
    <ligand>
        <name>Zn(2+)</name>
        <dbReference type="ChEBI" id="CHEBI:29105"/>
    </ligand>
</feature>
<feature type="binding site" evidence="1">
    <location>
        <position position="273"/>
    </location>
    <ligand>
        <name>Zn(2+)</name>
        <dbReference type="ChEBI" id="CHEBI:29105"/>
    </ligand>
</feature>
<feature type="binding site" evidence="1">
    <location>
        <position position="274"/>
    </location>
    <ligand>
        <name>Zn(2+)</name>
        <dbReference type="ChEBI" id="CHEBI:29105"/>
    </ligand>
</feature>
<reference key="1">
    <citation type="journal article" date="2005" name="Genome Res.">
        <title>Comparative genome sequencing of Drosophila pseudoobscura: chromosomal, gene, and cis-element evolution.</title>
        <authorList>
            <person name="Richards S."/>
            <person name="Liu Y."/>
            <person name="Bettencourt B.R."/>
            <person name="Hradecky P."/>
            <person name="Letovsky S."/>
            <person name="Nielsen R."/>
            <person name="Thornton K."/>
            <person name="Hubisz M.J."/>
            <person name="Chen R."/>
            <person name="Meisel R.P."/>
            <person name="Couronne O."/>
            <person name="Hua S."/>
            <person name="Smith M.A."/>
            <person name="Zhang P."/>
            <person name="Liu J."/>
            <person name="Bussemaker H.J."/>
            <person name="van Batenburg M.F."/>
            <person name="Howells S.L."/>
            <person name="Scherer S.E."/>
            <person name="Sodergren E."/>
            <person name="Matthews B.B."/>
            <person name="Crosby M.A."/>
            <person name="Schroeder A.J."/>
            <person name="Ortiz-Barrientos D."/>
            <person name="Rives C.M."/>
            <person name="Metzker M.L."/>
            <person name="Muzny D.M."/>
            <person name="Scott G."/>
            <person name="Steffen D."/>
            <person name="Wheeler D.A."/>
            <person name="Worley K.C."/>
            <person name="Havlak P."/>
            <person name="Durbin K.J."/>
            <person name="Egan A."/>
            <person name="Gill R."/>
            <person name="Hume J."/>
            <person name="Morgan M.B."/>
            <person name="Miner G."/>
            <person name="Hamilton C."/>
            <person name="Huang Y."/>
            <person name="Waldron L."/>
            <person name="Verduzco D."/>
            <person name="Clerc-Blankenburg K.P."/>
            <person name="Dubchak I."/>
            <person name="Noor M.A.F."/>
            <person name="Anderson W."/>
            <person name="White K.P."/>
            <person name="Clark A.G."/>
            <person name="Schaeffer S.W."/>
            <person name="Gelbart W.M."/>
            <person name="Weinstock G.M."/>
            <person name="Gibbs R.A."/>
        </authorList>
    </citation>
    <scope>NUCLEOTIDE SEQUENCE [LARGE SCALE GENOMIC DNA]</scope>
    <source>
        <strain>MV2-25 / Tucson 14011-0121.94</strain>
    </source>
</reference>
<gene>
    <name type="primary">PNGase</name>
    <name type="ORF">GA20643</name>
</gene>